<comment type="function">
    <text evidence="1">Catalyzes the ferrous insertion into protoporphyrin IX.</text>
</comment>
<comment type="catalytic activity">
    <reaction evidence="1">
        <text>heme b + 2 H(+) = protoporphyrin IX + Fe(2+)</text>
        <dbReference type="Rhea" id="RHEA:22584"/>
        <dbReference type="ChEBI" id="CHEBI:15378"/>
        <dbReference type="ChEBI" id="CHEBI:29033"/>
        <dbReference type="ChEBI" id="CHEBI:57306"/>
        <dbReference type="ChEBI" id="CHEBI:60344"/>
        <dbReference type="EC" id="4.98.1.1"/>
    </reaction>
</comment>
<comment type="pathway">
    <text evidence="1">Porphyrin-containing compound metabolism; protoheme biosynthesis; protoheme from protoporphyrin-IX: step 1/1.</text>
</comment>
<comment type="subcellular location">
    <subcellularLocation>
        <location evidence="1">Cytoplasm</location>
    </subcellularLocation>
</comment>
<comment type="similarity">
    <text evidence="1">Belongs to the ferrochelatase family.</text>
</comment>
<name>HEMH_ACIBC</name>
<gene>
    <name evidence="1" type="primary">hemH</name>
    <name type="ordered locus">ACICU_00392</name>
</gene>
<reference key="1">
    <citation type="journal article" date="2008" name="Antimicrob. Agents Chemother.">
        <title>Whole-genome pyrosequencing of an epidemic multidrug-resistant Acinetobacter baumannii strain belonging to the European clone II group.</title>
        <authorList>
            <person name="Iacono M."/>
            <person name="Villa L."/>
            <person name="Fortini D."/>
            <person name="Bordoni R."/>
            <person name="Imperi F."/>
            <person name="Bonnal R.J."/>
            <person name="Sicheritz-Ponten T."/>
            <person name="De Bellis G."/>
            <person name="Visca P."/>
            <person name="Cassone A."/>
            <person name="Carattoli A."/>
        </authorList>
    </citation>
    <scope>NUCLEOTIDE SEQUENCE [LARGE SCALE GENOMIC DNA]</scope>
    <source>
        <strain>ACICU</strain>
    </source>
</reference>
<proteinExistence type="inferred from homology"/>
<evidence type="ECO:0000255" key="1">
    <source>
        <dbReference type="HAMAP-Rule" id="MF_00323"/>
    </source>
</evidence>
<keyword id="KW-0963">Cytoplasm</keyword>
<keyword id="KW-0350">Heme biosynthesis</keyword>
<keyword id="KW-0408">Iron</keyword>
<keyword id="KW-0456">Lyase</keyword>
<keyword id="KW-0479">Metal-binding</keyword>
<keyword id="KW-0627">Porphyrin biosynthesis</keyword>
<organism>
    <name type="scientific">Acinetobacter baumannii (strain ACICU)</name>
    <dbReference type="NCBI Taxonomy" id="405416"/>
    <lineage>
        <taxon>Bacteria</taxon>
        <taxon>Pseudomonadati</taxon>
        <taxon>Pseudomonadota</taxon>
        <taxon>Gammaproteobacteria</taxon>
        <taxon>Moraxellales</taxon>
        <taxon>Moraxellaceae</taxon>
        <taxon>Acinetobacter</taxon>
        <taxon>Acinetobacter calcoaceticus/baumannii complex</taxon>
    </lineage>
</organism>
<accession>B2I2R9</accession>
<feature type="chain" id="PRO_1000116022" description="Ferrochelatase">
    <location>
        <begin position="1"/>
        <end position="338"/>
    </location>
</feature>
<feature type="binding site" evidence="1">
    <location>
        <position position="202"/>
    </location>
    <ligand>
        <name>Fe cation</name>
        <dbReference type="ChEBI" id="CHEBI:24875"/>
    </ligand>
</feature>
<feature type="binding site" evidence="1">
    <location>
        <position position="283"/>
    </location>
    <ligand>
        <name>Fe cation</name>
        <dbReference type="ChEBI" id="CHEBI:24875"/>
    </ligand>
</feature>
<sequence length="338" mass="38276">MSFEQKPKVTVILANLGTPDEATVPAVRRFLKQFLSDPRVIEIPKFIWWIILNLFVLPFRPKRVAHAYASVWSTDSPMREIVFEQTQRVQAYLERENKQFDLTVLPAMTYGNPGIDAVLEKLATNPQEHVILLPLFPQYSATSTAPLYDAFAKWIPTQRNLPGLTIIKDYYQHPMFIQALAESVLAYQEQHGKPEKLLMSFHGIPQPYADKGDPYADRCRITAKLVAEALHLKDDEWAISFQSRFGKQEWVKPYTDQLLQDWAKQGVKSVQVLSPAFSADCLETLEELAIQNAELFQQAGGGSYAYIPALNSDQAHIDLLAGLVQANLDALTHTLAHR</sequence>
<protein>
    <recommendedName>
        <fullName evidence="1">Ferrochelatase</fullName>
        <ecNumber evidence="1">4.98.1.1</ecNumber>
    </recommendedName>
    <alternativeName>
        <fullName evidence="1">Heme synthase</fullName>
    </alternativeName>
    <alternativeName>
        <fullName evidence="1">Protoheme ferro-lyase</fullName>
    </alternativeName>
</protein>
<dbReference type="EC" id="4.98.1.1" evidence="1"/>
<dbReference type="EMBL" id="CP000863">
    <property type="protein sequence ID" value="ACC55704.1"/>
    <property type="molecule type" value="Genomic_DNA"/>
</dbReference>
<dbReference type="RefSeq" id="WP_000007331.1">
    <property type="nucleotide sequence ID" value="NZ_CP031380.1"/>
</dbReference>
<dbReference type="SMR" id="B2I2R9"/>
<dbReference type="KEGG" id="abc:ACICU_00392"/>
<dbReference type="HOGENOM" id="CLU_018884_0_0_6"/>
<dbReference type="UniPathway" id="UPA00252">
    <property type="reaction ID" value="UER00325"/>
</dbReference>
<dbReference type="Proteomes" id="UP000008839">
    <property type="component" value="Chromosome"/>
</dbReference>
<dbReference type="GO" id="GO:0005737">
    <property type="term" value="C:cytoplasm"/>
    <property type="evidence" value="ECO:0007669"/>
    <property type="project" value="UniProtKB-SubCell"/>
</dbReference>
<dbReference type="GO" id="GO:0004325">
    <property type="term" value="F:ferrochelatase activity"/>
    <property type="evidence" value="ECO:0007669"/>
    <property type="project" value="UniProtKB-UniRule"/>
</dbReference>
<dbReference type="GO" id="GO:0046872">
    <property type="term" value="F:metal ion binding"/>
    <property type="evidence" value="ECO:0007669"/>
    <property type="project" value="UniProtKB-KW"/>
</dbReference>
<dbReference type="GO" id="GO:0006783">
    <property type="term" value="P:heme biosynthetic process"/>
    <property type="evidence" value="ECO:0007669"/>
    <property type="project" value="UniProtKB-UniRule"/>
</dbReference>
<dbReference type="CDD" id="cd00419">
    <property type="entry name" value="Ferrochelatase_C"/>
    <property type="match status" value="1"/>
</dbReference>
<dbReference type="CDD" id="cd03411">
    <property type="entry name" value="Ferrochelatase_N"/>
    <property type="match status" value="1"/>
</dbReference>
<dbReference type="FunFam" id="3.40.50.1400:FF:000002">
    <property type="entry name" value="Ferrochelatase"/>
    <property type="match status" value="1"/>
</dbReference>
<dbReference type="Gene3D" id="3.40.50.1400">
    <property type="match status" value="2"/>
</dbReference>
<dbReference type="HAMAP" id="MF_00323">
    <property type="entry name" value="Ferrochelatase"/>
    <property type="match status" value="1"/>
</dbReference>
<dbReference type="InterPro" id="IPR001015">
    <property type="entry name" value="Ferrochelatase"/>
</dbReference>
<dbReference type="InterPro" id="IPR019772">
    <property type="entry name" value="Ferrochelatase_AS"/>
</dbReference>
<dbReference type="InterPro" id="IPR033644">
    <property type="entry name" value="Ferrochelatase_C"/>
</dbReference>
<dbReference type="InterPro" id="IPR033659">
    <property type="entry name" value="Ferrochelatase_N"/>
</dbReference>
<dbReference type="NCBIfam" id="TIGR00109">
    <property type="entry name" value="hemH"/>
    <property type="match status" value="1"/>
</dbReference>
<dbReference type="PANTHER" id="PTHR11108">
    <property type="entry name" value="FERROCHELATASE"/>
    <property type="match status" value="1"/>
</dbReference>
<dbReference type="PANTHER" id="PTHR11108:SF1">
    <property type="entry name" value="FERROCHELATASE, MITOCHONDRIAL"/>
    <property type="match status" value="1"/>
</dbReference>
<dbReference type="Pfam" id="PF00762">
    <property type="entry name" value="Ferrochelatase"/>
    <property type="match status" value="1"/>
</dbReference>
<dbReference type="SUPFAM" id="SSF53800">
    <property type="entry name" value="Chelatase"/>
    <property type="match status" value="1"/>
</dbReference>
<dbReference type="PROSITE" id="PS00534">
    <property type="entry name" value="FERROCHELATASE"/>
    <property type="match status" value="1"/>
</dbReference>